<evidence type="ECO:0000255" key="1">
    <source>
        <dbReference type="HAMAP-Rule" id="MF_00009"/>
    </source>
</evidence>
<evidence type="ECO:0000256" key="2">
    <source>
        <dbReference type="SAM" id="MobiDB-lite"/>
    </source>
</evidence>
<proteinExistence type="inferred from homology"/>
<comment type="function">
    <text evidence="1">Single strand-specific metallo-endoribonuclease involved in late-stage 70S ribosome quality control and in maturation of the 3' terminus of the 16S rRNA.</text>
</comment>
<comment type="cofactor">
    <cofactor evidence="1">
        <name>Zn(2+)</name>
        <dbReference type="ChEBI" id="CHEBI:29105"/>
    </cofactor>
    <text evidence="1">Binds 1 zinc ion.</text>
</comment>
<comment type="subcellular location">
    <subcellularLocation>
        <location evidence="1">Cytoplasm</location>
    </subcellularLocation>
</comment>
<comment type="similarity">
    <text evidence="1">Belongs to the endoribonuclease YbeY family.</text>
</comment>
<sequence>MSIEFINESGYDGVNEEMLIDVCSYALGCLDVNPDAECTITAVDLDTIADLHVRWMDLEGPTDVMSFPMDELTPGASAGRPDAVEAGPAMLGDIVLCPEFAQRQATAAGHSLGHELALLTVHGCLHLLGYDHTTAAEEKEMFGLQNELLADWYEDLAARGVSYQPKPSGPKAFPDAAERAELDKEVPGGGI</sequence>
<protein>
    <recommendedName>
        <fullName evidence="1">Endoribonuclease YbeY</fullName>
        <ecNumber evidence="1">3.1.-.-</ecNumber>
    </recommendedName>
</protein>
<gene>
    <name evidence="1" type="primary">ybeY</name>
    <name type="ordered locus">cauri_1806</name>
</gene>
<reference key="1">
    <citation type="journal article" date="2010" name="BMC Genomics">
        <title>Complete genome sequence and lifestyle of black-pigmented Corynebacterium aurimucosum ATCC 700975 (formerly C. nigricans CN-1) isolated from a vaginal swab of a woman with spontaneous abortion.</title>
        <authorList>
            <person name="Trost E."/>
            <person name="Gotker S."/>
            <person name="Schneider J."/>
            <person name="Schneiker-Bekel S."/>
            <person name="Szczepanowski R."/>
            <person name="Tilker A."/>
            <person name="Viehoever P."/>
            <person name="Arnold W."/>
            <person name="Bekel T."/>
            <person name="Blom J."/>
            <person name="Gartemann K.H."/>
            <person name="Linke B."/>
            <person name="Goesmann A."/>
            <person name="Puhler A."/>
            <person name="Shukla S.K."/>
            <person name="Tauch A."/>
        </authorList>
    </citation>
    <scope>NUCLEOTIDE SEQUENCE [LARGE SCALE GENOMIC DNA]</scope>
    <source>
        <strain>ATCC 700975 / DSM 44827 / CIP 107346 / CN-1</strain>
    </source>
</reference>
<feature type="chain" id="PRO_1000199966" description="Endoribonuclease YbeY">
    <location>
        <begin position="1"/>
        <end position="191"/>
    </location>
</feature>
<feature type="region of interest" description="Disordered" evidence="2">
    <location>
        <begin position="164"/>
        <end position="191"/>
    </location>
</feature>
<feature type="compositionally biased region" description="Basic and acidic residues" evidence="2">
    <location>
        <begin position="176"/>
        <end position="191"/>
    </location>
</feature>
<feature type="binding site" evidence="1">
    <location>
        <position position="122"/>
    </location>
    <ligand>
        <name>Zn(2+)</name>
        <dbReference type="ChEBI" id="CHEBI:29105"/>
        <note>catalytic</note>
    </ligand>
</feature>
<feature type="binding site" evidence="1">
    <location>
        <position position="126"/>
    </location>
    <ligand>
        <name>Zn(2+)</name>
        <dbReference type="ChEBI" id="CHEBI:29105"/>
        <note>catalytic</note>
    </ligand>
</feature>
<feature type="binding site" evidence="1">
    <location>
        <position position="132"/>
    </location>
    <ligand>
        <name>Zn(2+)</name>
        <dbReference type="ChEBI" id="CHEBI:29105"/>
        <note>catalytic</note>
    </ligand>
</feature>
<organism>
    <name type="scientific">Corynebacterium aurimucosum (strain ATCC 700975 / DSM 44827 / CIP 107346 / CN-1)</name>
    <name type="common">Corynebacterium nigricans</name>
    <dbReference type="NCBI Taxonomy" id="548476"/>
    <lineage>
        <taxon>Bacteria</taxon>
        <taxon>Bacillati</taxon>
        <taxon>Actinomycetota</taxon>
        <taxon>Actinomycetes</taxon>
        <taxon>Mycobacteriales</taxon>
        <taxon>Corynebacteriaceae</taxon>
        <taxon>Corynebacterium</taxon>
    </lineage>
</organism>
<accession>C3PHU5</accession>
<dbReference type="EC" id="3.1.-.-" evidence="1"/>
<dbReference type="EMBL" id="CP001601">
    <property type="protein sequence ID" value="ACP33399.1"/>
    <property type="molecule type" value="Genomic_DNA"/>
</dbReference>
<dbReference type="RefSeq" id="WP_010190771.1">
    <property type="nucleotide sequence ID" value="NC_012590.1"/>
</dbReference>
<dbReference type="SMR" id="C3PHU5"/>
<dbReference type="STRING" id="548476.cauri_1806"/>
<dbReference type="GeneID" id="31924440"/>
<dbReference type="KEGG" id="car:cauri_1806"/>
<dbReference type="eggNOG" id="COG0319">
    <property type="taxonomic scope" value="Bacteria"/>
</dbReference>
<dbReference type="HOGENOM" id="CLU_106710_3_2_11"/>
<dbReference type="OrthoDB" id="9807740at2"/>
<dbReference type="Proteomes" id="UP000002077">
    <property type="component" value="Chromosome"/>
</dbReference>
<dbReference type="GO" id="GO:0005737">
    <property type="term" value="C:cytoplasm"/>
    <property type="evidence" value="ECO:0007669"/>
    <property type="project" value="UniProtKB-SubCell"/>
</dbReference>
<dbReference type="GO" id="GO:0004222">
    <property type="term" value="F:metalloendopeptidase activity"/>
    <property type="evidence" value="ECO:0007669"/>
    <property type="project" value="InterPro"/>
</dbReference>
<dbReference type="GO" id="GO:0004521">
    <property type="term" value="F:RNA endonuclease activity"/>
    <property type="evidence" value="ECO:0007669"/>
    <property type="project" value="UniProtKB-UniRule"/>
</dbReference>
<dbReference type="GO" id="GO:0008270">
    <property type="term" value="F:zinc ion binding"/>
    <property type="evidence" value="ECO:0007669"/>
    <property type="project" value="UniProtKB-UniRule"/>
</dbReference>
<dbReference type="GO" id="GO:0006364">
    <property type="term" value="P:rRNA processing"/>
    <property type="evidence" value="ECO:0007669"/>
    <property type="project" value="UniProtKB-UniRule"/>
</dbReference>
<dbReference type="Gene3D" id="3.40.390.30">
    <property type="entry name" value="Metalloproteases ('zincins'), catalytic domain"/>
    <property type="match status" value="1"/>
</dbReference>
<dbReference type="HAMAP" id="MF_00009">
    <property type="entry name" value="Endoribonucl_YbeY"/>
    <property type="match status" value="1"/>
</dbReference>
<dbReference type="InterPro" id="IPR023091">
    <property type="entry name" value="MetalPrtase_cat_dom_sf_prd"/>
</dbReference>
<dbReference type="InterPro" id="IPR002036">
    <property type="entry name" value="YbeY"/>
</dbReference>
<dbReference type="InterPro" id="IPR020549">
    <property type="entry name" value="YbeY_CS"/>
</dbReference>
<dbReference type="NCBIfam" id="TIGR00043">
    <property type="entry name" value="rRNA maturation RNase YbeY"/>
    <property type="match status" value="1"/>
</dbReference>
<dbReference type="PANTHER" id="PTHR46986">
    <property type="entry name" value="ENDORIBONUCLEASE YBEY, CHLOROPLASTIC"/>
    <property type="match status" value="1"/>
</dbReference>
<dbReference type="PANTHER" id="PTHR46986:SF1">
    <property type="entry name" value="ENDORIBONUCLEASE YBEY, CHLOROPLASTIC"/>
    <property type="match status" value="1"/>
</dbReference>
<dbReference type="Pfam" id="PF02130">
    <property type="entry name" value="YbeY"/>
    <property type="match status" value="1"/>
</dbReference>
<dbReference type="SUPFAM" id="SSF55486">
    <property type="entry name" value="Metalloproteases ('zincins'), catalytic domain"/>
    <property type="match status" value="1"/>
</dbReference>
<dbReference type="PROSITE" id="PS01306">
    <property type="entry name" value="UPF0054"/>
    <property type="match status" value="1"/>
</dbReference>
<name>YBEY_CORA7</name>
<keyword id="KW-0963">Cytoplasm</keyword>
<keyword id="KW-0255">Endonuclease</keyword>
<keyword id="KW-0378">Hydrolase</keyword>
<keyword id="KW-0479">Metal-binding</keyword>
<keyword id="KW-0540">Nuclease</keyword>
<keyword id="KW-1185">Reference proteome</keyword>
<keyword id="KW-0690">Ribosome biogenesis</keyword>
<keyword id="KW-0698">rRNA processing</keyword>
<keyword id="KW-0862">Zinc</keyword>